<reference key="1">
    <citation type="submission" date="2007-07" db="EMBL/GenBank/DDBJ databases">
        <title>Genome sequence of Campylobacter curvus 525.92 isolated from human feces.</title>
        <authorList>
            <person name="Fouts D.E."/>
            <person name="Mongodin E.F."/>
            <person name="Puiu D."/>
            <person name="Sebastian Y."/>
            <person name="Miller W.G."/>
            <person name="Mandrell R.E."/>
            <person name="Lastovica A.J."/>
            <person name="Nelson K.E."/>
        </authorList>
    </citation>
    <scope>NUCLEOTIDE SEQUENCE [LARGE SCALE GENOMIC DNA]</scope>
    <source>
        <strain>525.92</strain>
    </source>
</reference>
<dbReference type="EC" id="2.8.1.6" evidence="1"/>
<dbReference type="EMBL" id="CP000767">
    <property type="protein sequence ID" value="EAU01333.1"/>
    <property type="molecule type" value="Genomic_DNA"/>
</dbReference>
<dbReference type="SMR" id="A7H0I4"/>
<dbReference type="STRING" id="360105.CCV52592_0574"/>
<dbReference type="KEGG" id="ccv:CCV52592_0574"/>
<dbReference type="HOGENOM" id="CLU_033172_2_1_7"/>
<dbReference type="OrthoDB" id="9786826at2"/>
<dbReference type="UniPathway" id="UPA00078">
    <property type="reaction ID" value="UER00162"/>
</dbReference>
<dbReference type="Proteomes" id="UP000006380">
    <property type="component" value="Chromosome"/>
</dbReference>
<dbReference type="GO" id="GO:0051537">
    <property type="term" value="F:2 iron, 2 sulfur cluster binding"/>
    <property type="evidence" value="ECO:0007669"/>
    <property type="project" value="UniProtKB-KW"/>
</dbReference>
<dbReference type="GO" id="GO:0051539">
    <property type="term" value="F:4 iron, 4 sulfur cluster binding"/>
    <property type="evidence" value="ECO:0007669"/>
    <property type="project" value="UniProtKB-KW"/>
</dbReference>
<dbReference type="GO" id="GO:0004076">
    <property type="term" value="F:biotin synthase activity"/>
    <property type="evidence" value="ECO:0007669"/>
    <property type="project" value="UniProtKB-UniRule"/>
</dbReference>
<dbReference type="GO" id="GO:0005506">
    <property type="term" value="F:iron ion binding"/>
    <property type="evidence" value="ECO:0007669"/>
    <property type="project" value="UniProtKB-UniRule"/>
</dbReference>
<dbReference type="GO" id="GO:0009102">
    <property type="term" value="P:biotin biosynthetic process"/>
    <property type="evidence" value="ECO:0007669"/>
    <property type="project" value="UniProtKB-UniRule"/>
</dbReference>
<dbReference type="CDD" id="cd01335">
    <property type="entry name" value="Radical_SAM"/>
    <property type="match status" value="1"/>
</dbReference>
<dbReference type="Gene3D" id="3.20.20.70">
    <property type="entry name" value="Aldolase class I"/>
    <property type="match status" value="1"/>
</dbReference>
<dbReference type="HAMAP" id="MF_01694">
    <property type="entry name" value="BioB"/>
    <property type="match status" value="1"/>
</dbReference>
<dbReference type="InterPro" id="IPR013785">
    <property type="entry name" value="Aldolase_TIM"/>
</dbReference>
<dbReference type="InterPro" id="IPR010722">
    <property type="entry name" value="BATS_dom"/>
</dbReference>
<dbReference type="InterPro" id="IPR002684">
    <property type="entry name" value="Biotin_synth/BioAB"/>
</dbReference>
<dbReference type="InterPro" id="IPR024177">
    <property type="entry name" value="Biotin_synthase"/>
</dbReference>
<dbReference type="InterPro" id="IPR006638">
    <property type="entry name" value="Elp3/MiaA/NifB-like_rSAM"/>
</dbReference>
<dbReference type="InterPro" id="IPR007197">
    <property type="entry name" value="rSAM"/>
</dbReference>
<dbReference type="NCBIfam" id="TIGR00433">
    <property type="entry name" value="bioB"/>
    <property type="match status" value="1"/>
</dbReference>
<dbReference type="NCBIfam" id="NF006308">
    <property type="entry name" value="PRK08508.1"/>
    <property type="match status" value="1"/>
</dbReference>
<dbReference type="PANTHER" id="PTHR22976">
    <property type="entry name" value="BIOTIN SYNTHASE"/>
    <property type="match status" value="1"/>
</dbReference>
<dbReference type="PANTHER" id="PTHR22976:SF2">
    <property type="entry name" value="BIOTIN SYNTHASE, MITOCHONDRIAL"/>
    <property type="match status" value="1"/>
</dbReference>
<dbReference type="Pfam" id="PF06968">
    <property type="entry name" value="BATS"/>
    <property type="match status" value="1"/>
</dbReference>
<dbReference type="Pfam" id="PF04055">
    <property type="entry name" value="Radical_SAM"/>
    <property type="match status" value="1"/>
</dbReference>
<dbReference type="PIRSF" id="PIRSF001619">
    <property type="entry name" value="Biotin_synth"/>
    <property type="match status" value="1"/>
</dbReference>
<dbReference type="SFLD" id="SFLDG01278">
    <property type="entry name" value="biotin_synthase_like"/>
    <property type="match status" value="1"/>
</dbReference>
<dbReference type="SFLD" id="SFLDS00029">
    <property type="entry name" value="Radical_SAM"/>
    <property type="match status" value="1"/>
</dbReference>
<dbReference type="SMART" id="SM00876">
    <property type="entry name" value="BATS"/>
    <property type="match status" value="1"/>
</dbReference>
<dbReference type="SMART" id="SM00729">
    <property type="entry name" value="Elp3"/>
    <property type="match status" value="1"/>
</dbReference>
<dbReference type="SUPFAM" id="SSF102114">
    <property type="entry name" value="Radical SAM enzymes"/>
    <property type="match status" value="1"/>
</dbReference>
<dbReference type="PROSITE" id="PS51918">
    <property type="entry name" value="RADICAL_SAM"/>
    <property type="match status" value="1"/>
</dbReference>
<name>BIOB_CAMC5</name>
<feature type="chain" id="PRO_0000381281" description="Biotin synthase">
    <location>
        <begin position="1"/>
        <end position="279"/>
    </location>
</feature>
<feature type="domain" description="Radical SAM core" evidence="2">
    <location>
        <begin position="2"/>
        <end position="228"/>
    </location>
</feature>
<feature type="binding site" evidence="1">
    <location>
        <position position="17"/>
    </location>
    <ligand>
        <name>[4Fe-4S] cluster</name>
        <dbReference type="ChEBI" id="CHEBI:49883"/>
        <note>4Fe-4S-S-AdoMet</note>
    </ligand>
</feature>
<feature type="binding site" evidence="1">
    <location>
        <position position="21"/>
    </location>
    <ligand>
        <name>[4Fe-4S] cluster</name>
        <dbReference type="ChEBI" id="CHEBI:49883"/>
        <note>4Fe-4S-S-AdoMet</note>
    </ligand>
</feature>
<feature type="binding site" evidence="1">
    <location>
        <position position="24"/>
    </location>
    <ligand>
        <name>[4Fe-4S] cluster</name>
        <dbReference type="ChEBI" id="CHEBI:49883"/>
        <note>4Fe-4S-S-AdoMet</note>
    </ligand>
</feature>
<feature type="binding site" evidence="1">
    <location>
        <position position="61"/>
    </location>
    <ligand>
        <name>[2Fe-2S] cluster</name>
        <dbReference type="ChEBI" id="CHEBI:190135"/>
    </ligand>
</feature>
<feature type="binding site" evidence="1">
    <location>
        <position position="96"/>
    </location>
    <ligand>
        <name>[2Fe-2S] cluster</name>
        <dbReference type="ChEBI" id="CHEBI:190135"/>
    </ligand>
</feature>
<feature type="binding site" evidence="1">
    <location>
        <position position="154"/>
    </location>
    <ligand>
        <name>[2Fe-2S] cluster</name>
        <dbReference type="ChEBI" id="CHEBI:190135"/>
    </ligand>
</feature>
<feature type="binding site" evidence="1">
    <location>
        <position position="221"/>
    </location>
    <ligand>
        <name>[2Fe-2S] cluster</name>
        <dbReference type="ChEBI" id="CHEBI:190135"/>
    </ligand>
</feature>
<proteinExistence type="inferred from homology"/>
<keyword id="KW-0001">2Fe-2S</keyword>
<keyword id="KW-0004">4Fe-4S</keyword>
<keyword id="KW-0093">Biotin biosynthesis</keyword>
<keyword id="KW-0408">Iron</keyword>
<keyword id="KW-0411">Iron-sulfur</keyword>
<keyword id="KW-0479">Metal-binding</keyword>
<keyword id="KW-1185">Reference proteome</keyword>
<keyword id="KW-0949">S-adenosyl-L-methionine</keyword>
<keyword id="KW-0808">Transferase</keyword>
<evidence type="ECO:0000255" key="1">
    <source>
        <dbReference type="HAMAP-Rule" id="MF_01694"/>
    </source>
</evidence>
<evidence type="ECO:0000255" key="2">
    <source>
        <dbReference type="PROSITE-ProRule" id="PRU01266"/>
    </source>
</evidence>
<accession>A7H0I4</accession>
<comment type="function">
    <text evidence="1">Catalyzes the conversion of dethiobiotin (DTB) to biotin by the insertion of a sulfur atom into dethiobiotin via a radical-based mechanism.</text>
</comment>
<comment type="catalytic activity">
    <reaction evidence="1">
        <text>(4R,5S)-dethiobiotin + (sulfur carrier)-SH + 2 reduced [2Fe-2S]-[ferredoxin] + 2 S-adenosyl-L-methionine = (sulfur carrier)-H + biotin + 2 5'-deoxyadenosine + 2 L-methionine + 2 oxidized [2Fe-2S]-[ferredoxin]</text>
        <dbReference type="Rhea" id="RHEA:22060"/>
        <dbReference type="Rhea" id="RHEA-COMP:10000"/>
        <dbReference type="Rhea" id="RHEA-COMP:10001"/>
        <dbReference type="Rhea" id="RHEA-COMP:14737"/>
        <dbReference type="Rhea" id="RHEA-COMP:14739"/>
        <dbReference type="ChEBI" id="CHEBI:17319"/>
        <dbReference type="ChEBI" id="CHEBI:29917"/>
        <dbReference type="ChEBI" id="CHEBI:33737"/>
        <dbReference type="ChEBI" id="CHEBI:33738"/>
        <dbReference type="ChEBI" id="CHEBI:57586"/>
        <dbReference type="ChEBI" id="CHEBI:57844"/>
        <dbReference type="ChEBI" id="CHEBI:59789"/>
        <dbReference type="ChEBI" id="CHEBI:64428"/>
        <dbReference type="ChEBI" id="CHEBI:149473"/>
        <dbReference type="EC" id="2.8.1.6"/>
    </reaction>
</comment>
<comment type="cofactor">
    <cofactor evidence="1">
        <name>[4Fe-4S] cluster</name>
        <dbReference type="ChEBI" id="CHEBI:49883"/>
    </cofactor>
    <text evidence="1">Binds 1 [4Fe-4S] cluster. The cluster is coordinated with 3 cysteines and an exchangeable S-adenosyl-L-methionine.</text>
</comment>
<comment type="cofactor">
    <cofactor evidence="1">
        <name>[2Fe-2S] cluster</name>
        <dbReference type="ChEBI" id="CHEBI:190135"/>
    </cofactor>
    <text evidence="1">Binds 1 [2Fe-2S] cluster. The cluster is coordinated with 3 cysteines and 1 arginine.</text>
</comment>
<comment type="pathway">
    <text evidence="1">Cofactor biosynthesis; biotin biosynthesis; biotin from 7,8-diaminononanoate: step 2/2.</text>
</comment>
<comment type="subunit">
    <text evidence="1">Homodimer.</text>
</comment>
<comment type="similarity">
    <text evidence="1">Belongs to the radical SAM superfamily. Biotin synthase family.</text>
</comment>
<organism>
    <name type="scientific">Campylobacter curvus (strain 525.92)</name>
    <dbReference type="NCBI Taxonomy" id="360105"/>
    <lineage>
        <taxon>Bacteria</taxon>
        <taxon>Pseudomonadati</taxon>
        <taxon>Campylobacterota</taxon>
        <taxon>Epsilonproteobacteria</taxon>
        <taxon>Campylobacterales</taxon>
        <taxon>Campylobacteraceae</taxon>
        <taxon>Campylobacter</taxon>
    </lineage>
</organism>
<protein>
    <recommendedName>
        <fullName evidence="1">Biotin synthase</fullName>
        <ecNumber evidence="1">2.8.1.6</ecNumber>
    </recommendedName>
</protein>
<sequence length="279" mass="30630">MKTIMLCAISSLSAGNCSEDCHYCTQSAGTKADIKRYKLKSPEQVVDEAKKAYANHALGFCLVTSGARLDDQKTEQVACIARAVGKEVPQLMLIACNGMASYDQLKELKNAGVFSYNHNLETSRDFFPKICTTHSWDERWQTNLDAKATGLQLCCGGIYGIGESKTDRASFRTSLKELAPFSSPINFFIANPALKIKTPRLSVDEALKIVDDTVLALPNARIMIAGGREAVLGERQYEIFDHGVSAVVIGDYLTTKGEESCKDIAKFKQMGFEFASKCH</sequence>
<gene>
    <name evidence="1" type="primary">bioB</name>
    <name type="ordered locus">Ccur92_16720</name>
    <name type="ORF">CCV52592_0574</name>
</gene>